<accession>Q753M9</accession>
<keyword id="KW-0072">Autophagy</keyword>
<keyword id="KW-0472">Membrane</keyword>
<keyword id="KW-0496">Mitochondrion</keyword>
<keyword id="KW-1000">Mitochondrion outer membrane</keyword>
<keyword id="KW-1185">Reference proteome</keyword>
<keyword id="KW-0812">Transmembrane</keyword>
<keyword id="KW-1133">Transmembrane helix</keyword>
<keyword id="KW-0926">Vacuole</keyword>
<protein>
    <recommendedName>
        <fullName>Autophagy-related protein 32</fullName>
    </recommendedName>
</protein>
<comment type="function">
    <text evidence="1">Mitophagy-specific receptor that recruits the autophagic machinery to mitochondria and regulates selective degradation of mitochondria. Mitophagy contributes to regulate mitochondrial quantity and quality by eliminating the mitochondria to a basal level to fulfill cellular energy requirements and preventing excess ROS production. Recruits ATG11 to the surface of mitochondria. Also promotes autophagy-dependent peroxisome degradation (By similarity).</text>
</comment>
<comment type="subcellular location">
    <subcellularLocation>
        <location evidence="1">Mitochondrion outer membrane</location>
        <topology evidence="1">Single-pass membrane protein</topology>
    </subcellularLocation>
    <subcellularLocation>
        <location evidence="1">Vacuole membrane</location>
        <topology evidence="1">Single-pass membrane protein</topology>
    </subcellularLocation>
    <subcellularLocation>
        <location evidence="1">Preautophagosomal structure membrane</location>
        <topology evidence="1">Single-pass membrane protein</topology>
    </subcellularLocation>
    <text evidence="1">Is recruited to the preautophagosomal structure during mitophagy and imported into the vacuole along with mitochondria during starvation.</text>
</comment>
<comment type="similarity">
    <text evidence="4">Belongs to the ATG32 family.</text>
</comment>
<name>ATG32_EREGS</name>
<proteinExistence type="inferred from homology"/>
<sequence>MSTKSQVTRRVRTSIATPEDGVHGNNQHKGILDPHLSVLEMLDRQDGDGAGQVEEGAVMTVGKRRVERSLHHSISESWQAIKRSDYSFLSGTHEVGAMHSSVGILSSSDTSEEEAEMRPSAHGTVHLGSSLASPMRQLLVEEDNSCAEEDDCQTVTISMPSSSTSLVMPKLSLSQRLGEPQLLLVGQPARKFWLTIPKCYQKLFDVKNLGMVTRWDVGQRYLAVMVVFHDIAQAPELLDGLCEKAPCPTVIPVCQKGQKSTLAALLKRYTARKCIRVYCSPIIMSNHHEKHRLLKHLHNLCNESESGYETELTVKSKKQHRRPRKKDAGPVALRHWAIWTASFTIGIGIGCCISLMATTRFTFFSSAPLPLTAVIPAQIPSSVASDKPPHRLVPHFYMLCKTTIRQLGTSLRLFFFEKFESRTWVHIFGMDLHSDDPLASLGRLMPLDFIML</sequence>
<organism>
    <name type="scientific">Eremothecium gossypii (strain ATCC 10895 / CBS 109.51 / FGSC 9923 / NRRL Y-1056)</name>
    <name type="common">Yeast</name>
    <name type="synonym">Ashbya gossypii</name>
    <dbReference type="NCBI Taxonomy" id="284811"/>
    <lineage>
        <taxon>Eukaryota</taxon>
        <taxon>Fungi</taxon>
        <taxon>Dikarya</taxon>
        <taxon>Ascomycota</taxon>
        <taxon>Saccharomycotina</taxon>
        <taxon>Saccharomycetes</taxon>
        <taxon>Saccharomycetales</taxon>
        <taxon>Saccharomycetaceae</taxon>
        <taxon>Eremothecium</taxon>
    </lineage>
</organism>
<evidence type="ECO:0000250" key="1"/>
<evidence type="ECO:0000255" key="2"/>
<evidence type="ECO:0000256" key="3">
    <source>
        <dbReference type="SAM" id="MobiDB-lite"/>
    </source>
</evidence>
<evidence type="ECO:0000305" key="4"/>
<feature type="chain" id="PRO_0000399756" description="Autophagy-related protein 32">
    <location>
        <begin position="1"/>
        <end position="452"/>
    </location>
</feature>
<feature type="transmembrane region" description="Helical" evidence="2">
    <location>
        <begin position="336"/>
        <end position="356"/>
    </location>
</feature>
<feature type="region of interest" description="Disordered" evidence="3">
    <location>
        <begin position="1"/>
        <end position="28"/>
    </location>
</feature>
<dbReference type="EMBL" id="AE016819">
    <property type="protein sequence ID" value="AAS53654.1"/>
    <property type="molecule type" value="Genomic_DNA"/>
</dbReference>
<dbReference type="RefSeq" id="NP_985830.1">
    <property type="nucleotide sequence ID" value="NM_211185.2"/>
</dbReference>
<dbReference type="SMR" id="Q753M9"/>
<dbReference type="FunCoup" id="Q753M9">
    <property type="interactions" value="67"/>
</dbReference>
<dbReference type="STRING" id="284811.Q753M9"/>
<dbReference type="EnsemblFungi" id="AAS53654">
    <property type="protein sequence ID" value="AAS53654"/>
    <property type="gene ID" value="AGOS_AFR283W"/>
</dbReference>
<dbReference type="GeneID" id="4622093"/>
<dbReference type="KEGG" id="ago:AGOS_AFR283W"/>
<dbReference type="eggNOG" id="ENOG502QY5V">
    <property type="taxonomic scope" value="Eukaryota"/>
</dbReference>
<dbReference type="HOGENOM" id="CLU_039418_0_0_1"/>
<dbReference type="InParanoid" id="Q753M9"/>
<dbReference type="OMA" id="IPICQPG"/>
<dbReference type="OrthoDB" id="4066282at2759"/>
<dbReference type="Proteomes" id="UP000000591">
    <property type="component" value="Chromosome VI"/>
</dbReference>
<dbReference type="GO" id="GO:0005741">
    <property type="term" value="C:mitochondrial outer membrane"/>
    <property type="evidence" value="ECO:0007669"/>
    <property type="project" value="UniProtKB-SubCell"/>
</dbReference>
<dbReference type="GO" id="GO:0034045">
    <property type="term" value="C:phagophore assembly site membrane"/>
    <property type="evidence" value="ECO:0007669"/>
    <property type="project" value="UniProtKB-SubCell"/>
</dbReference>
<dbReference type="GO" id="GO:0005774">
    <property type="term" value="C:vacuolar membrane"/>
    <property type="evidence" value="ECO:0007669"/>
    <property type="project" value="UniProtKB-SubCell"/>
</dbReference>
<dbReference type="GO" id="GO:0006914">
    <property type="term" value="P:autophagy"/>
    <property type="evidence" value="ECO:0007669"/>
    <property type="project" value="UniProtKB-KW"/>
</dbReference>
<dbReference type="CDD" id="cd19929">
    <property type="entry name" value="psREC_Atg32"/>
    <property type="match status" value="1"/>
</dbReference>
<gene>
    <name type="primary">ATG32</name>
    <name type="ordered locus">AFR283W</name>
</gene>
<reference key="1">
    <citation type="journal article" date="2004" name="Science">
        <title>The Ashbya gossypii genome as a tool for mapping the ancient Saccharomyces cerevisiae genome.</title>
        <authorList>
            <person name="Dietrich F.S."/>
            <person name="Voegeli S."/>
            <person name="Brachat S."/>
            <person name="Lerch A."/>
            <person name="Gates K."/>
            <person name="Steiner S."/>
            <person name="Mohr C."/>
            <person name="Poehlmann R."/>
            <person name="Luedi P."/>
            <person name="Choi S."/>
            <person name="Wing R.A."/>
            <person name="Flavier A."/>
            <person name="Gaffney T.D."/>
            <person name="Philippsen P."/>
        </authorList>
    </citation>
    <scope>NUCLEOTIDE SEQUENCE [LARGE SCALE GENOMIC DNA]</scope>
    <source>
        <strain>ATCC 10895 / CBS 109.51 / FGSC 9923 / NRRL Y-1056</strain>
    </source>
</reference>
<reference key="2">
    <citation type="journal article" date="2013" name="G3 (Bethesda)">
        <title>Genomes of Ashbya fungi isolated from insects reveal four mating-type loci, numerous translocations, lack of transposons, and distinct gene duplications.</title>
        <authorList>
            <person name="Dietrich F.S."/>
            <person name="Voegeli S."/>
            <person name="Kuo S."/>
            <person name="Philippsen P."/>
        </authorList>
    </citation>
    <scope>GENOME REANNOTATION</scope>
    <source>
        <strain>ATCC 10895 / CBS 109.51 / FGSC 9923 / NRRL Y-1056</strain>
    </source>
</reference>